<keyword id="KW-0067">ATP-binding</keyword>
<keyword id="KW-0436">Ligase</keyword>
<keyword id="KW-0460">Magnesium</keyword>
<keyword id="KW-0479">Metal-binding</keyword>
<keyword id="KW-0547">Nucleotide-binding</keyword>
<keyword id="KW-1185">Reference proteome</keyword>
<keyword id="KW-0816">Tricarboxylic acid cycle</keyword>
<reference key="1">
    <citation type="submission" date="2005-08" db="EMBL/GenBank/DDBJ databases">
        <title>Complete sequence of Pelodictyon luteolum DSM 273.</title>
        <authorList>
            <consortium name="US DOE Joint Genome Institute"/>
            <person name="Copeland A."/>
            <person name="Lucas S."/>
            <person name="Lapidus A."/>
            <person name="Barry K."/>
            <person name="Detter J.C."/>
            <person name="Glavina T."/>
            <person name="Hammon N."/>
            <person name="Israni S."/>
            <person name="Pitluck S."/>
            <person name="Bryant D."/>
            <person name="Schmutz J."/>
            <person name="Larimer F."/>
            <person name="Land M."/>
            <person name="Kyrpides N."/>
            <person name="Ivanova N."/>
            <person name="Richardson P."/>
        </authorList>
    </citation>
    <scope>NUCLEOTIDE SEQUENCE [LARGE SCALE GENOMIC DNA]</scope>
    <source>
        <strain>DSM 273 / BCRC 81028 / 2530</strain>
    </source>
</reference>
<dbReference type="EC" id="6.2.1.5" evidence="1"/>
<dbReference type="EMBL" id="CP000096">
    <property type="protein sequence ID" value="ABB23385.1"/>
    <property type="molecule type" value="Genomic_DNA"/>
</dbReference>
<dbReference type="RefSeq" id="WP_011357260.1">
    <property type="nucleotide sequence ID" value="NC_007512.1"/>
</dbReference>
<dbReference type="SMR" id="Q3B5J6"/>
<dbReference type="STRING" id="319225.Plut_0497"/>
<dbReference type="KEGG" id="plt:Plut_0497"/>
<dbReference type="eggNOG" id="COG0045">
    <property type="taxonomic scope" value="Bacteria"/>
</dbReference>
<dbReference type="HOGENOM" id="CLU_037430_0_2_10"/>
<dbReference type="OrthoDB" id="9802602at2"/>
<dbReference type="UniPathway" id="UPA00223">
    <property type="reaction ID" value="UER00999"/>
</dbReference>
<dbReference type="Proteomes" id="UP000002709">
    <property type="component" value="Chromosome"/>
</dbReference>
<dbReference type="GO" id="GO:0005829">
    <property type="term" value="C:cytosol"/>
    <property type="evidence" value="ECO:0007669"/>
    <property type="project" value="TreeGrafter"/>
</dbReference>
<dbReference type="GO" id="GO:0042709">
    <property type="term" value="C:succinate-CoA ligase complex"/>
    <property type="evidence" value="ECO:0007669"/>
    <property type="project" value="TreeGrafter"/>
</dbReference>
<dbReference type="GO" id="GO:0005524">
    <property type="term" value="F:ATP binding"/>
    <property type="evidence" value="ECO:0007669"/>
    <property type="project" value="UniProtKB-UniRule"/>
</dbReference>
<dbReference type="GO" id="GO:0000287">
    <property type="term" value="F:magnesium ion binding"/>
    <property type="evidence" value="ECO:0007669"/>
    <property type="project" value="UniProtKB-UniRule"/>
</dbReference>
<dbReference type="GO" id="GO:0004775">
    <property type="term" value="F:succinate-CoA ligase (ADP-forming) activity"/>
    <property type="evidence" value="ECO:0007669"/>
    <property type="project" value="UniProtKB-UniRule"/>
</dbReference>
<dbReference type="GO" id="GO:0004776">
    <property type="term" value="F:succinate-CoA ligase (GDP-forming) activity"/>
    <property type="evidence" value="ECO:0007669"/>
    <property type="project" value="RHEA"/>
</dbReference>
<dbReference type="GO" id="GO:0006104">
    <property type="term" value="P:succinyl-CoA metabolic process"/>
    <property type="evidence" value="ECO:0007669"/>
    <property type="project" value="TreeGrafter"/>
</dbReference>
<dbReference type="GO" id="GO:0006099">
    <property type="term" value="P:tricarboxylic acid cycle"/>
    <property type="evidence" value="ECO:0007669"/>
    <property type="project" value="UniProtKB-UniRule"/>
</dbReference>
<dbReference type="FunFam" id="3.30.1490.20:FF:000002">
    <property type="entry name" value="Succinate--CoA ligase [ADP-forming] subunit beta"/>
    <property type="match status" value="1"/>
</dbReference>
<dbReference type="FunFam" id="3.30.470.20:FF:000002">
    <property type="entry name" value="Succinate--CoA ligase [ADP-forming] subunit beta"/>
    <property type="match status" value="1"/>
</dbReference>
<dbReference type="FunFam" id="3.40.50.261:FF:000001">
    <property type="entry name" value="Succinate--CoA ligase [ADP-forming] subunit beta"/>
    <property type="match status" value="1"/>
</dbReference>
<dbReference type="Gene3D" id="3.30.1490.20">
    <property type="entry name" value="ATP-grasp fold, A domain"/>
    <property type="match status" value="1"/>
</dbReference>
<dbReference type="Gene3D" id="3.30.470.20">
    <property type="entry name" value="ATP-grasp fold, B domain"/>
    <property type="match status" value="1"/>
</dbReference>
<dbReference type="Gene3D" id="3.40.50.261">
    <property type="entry name" value="Succinyl-CoA synthetase domains"/>
    <property type="match status" value="1"/>
</dbReference>
<dbReference type="HAMAP" id="MF_00558">
    <property type="entry name" value="Succ_CoA_beta"/>
    <property type="match status" value="1"/>
</dbReference>
<dbReference type="InterPro" id="IPR011761">
    <property type="entry name" value="ATP-grasp"/>
</dbReference>
<dbReference type="InterPro" id="IPR013650">
    <property type="entry name" value="ATP-grasp_succ-CoA_synth-type"/>
</dbReference>
<dbReference type="InterPro" id="IPR013815">
    <property type="entry name" value="ATP_grasp_subdomain_1"/>
</dbReference>
<dbReference type="InterPro" id="IPR017866">
    <property type="entry name" value="Succ-CoA_synthase_bsu_CS"/>
</dbReference>
<dbReference type="InterPro" id="IPR005811">
    <property type="entry name" value="SUCC_ACL_C"/>
</dbReference>
<dbReference type="InterPro" id="IPR005809">
    <property type="entry name" value="Succ_CoA_ligase-like_bsu"/>
</dbReference>
<dbReference type="InterPro" id="IPR016102">
    <property type="entry name" value="Succinyl-CoA_synth-like"/>
</dbReference>
<dbReference type="NCBIfam" id="NF001913">
    <property type="entry name" value="PRK00696.1"/>
    <property type="match status" value="1"/>
</dbReference>
<dbReference type="NCBIfam" id="TIGR01016">
    <property type="entry name" value="sucCoAbeta"/>
    <property type="match status" value="1"/>
</dbReference>
<dbReference type="PANTHER" id="PTHR11815:SF10">
    <property type="entry name" value="SUCCINATE--COA LIGASE [GDP-FORMING] SUBUNIT BETA, MITOCHONDRIAL"/>
    <property type="match status" value="1"/>
</dbReference>
<dbReference type="PANTHER" id="PTHR11815">
    <property type="entry name" value="SUCCINYL-COA SYNTHETASE BETA CHAIN"/>
    <property type="match status" value="1"/>
</dbReference>
<dbReference type="Pfam" id="PF08442">
    <property type="entry name" value="ATP-grasp_2"/>
    <property type="match status" value="1"/>
</dbReference>
<dbReference type="Pfam" id="PF00549">
    <property type="entry name" value="Ligase_CoA"/>
    <property type="match status" value="1"/>
</dbReference>
<dbReference type="PIRSF" id="PIRSF001554">
    <property type="entry name" value="SucCS_beta"/>
    <property type="match status" value="1"/>
</dbReference>
<dbReference type="SUPFAM" id="SSF56059">
    <property type="entry name" value="Glutathione synthetase ATP-binding domain-like"/>
    <property type="match status" value="1"/>
</dbReference>
<dbReference type="SUPFAM" id="SSF52210">
    <property type="entry name" value="Succinyl-CoA synthetase domains"/>
    <property type="match status" value="1"/>
</dbReference>
<dbReference type="PROSITE" id="PS50975">
    <property type="entry name" value="ATP_GRASP"/>
    <property type="match status" value="1"/>
</dbReference>
<dbReference type="PROSITE" id="PS01217">
    <property type="entry name" value="SUCCINYL_COA_LIG_3"/>
    <property type="match status" value="1"/>
</dbReference>
<accession>Q3B5J6</accession>
<proteinExistence type="inferred from homology"/>
<name>SUCC_CHLL3</name>
<feature type="chain" id="PRO_1000082153" description="Succinate--CoA ligase [ADP-forming] subunit beta">
    <location>
        <begin position="1"/>
        <end position="391"/>
    </location>
</feature>
<feature type="domain" description="ATP-grasp" evidence="1">
    <location>
        <begin position="9"/>
        <end position="248"/>
    </location>
</feature>
<feature type="binding site" evidence="1">
    <location>
        <position position="50"/>
    </location>
    <ligand>
        <name>ATP</name>
        <dbReference type="ChEBI" id="CHEBI:30616"/>
    </ligand>
</feature>
<feature type="binding site" evidence="1">
    <location>
        <begin position="57"/>
        <end position="59"/>
    </location>
    <ligand>
        <name>ATP</name>
        <dbReference type="ChEBI" id="CHEBI:30616"/>
    </ligand>
</feature>
<feature type="binding site" evidence="1">
    <location>
        <position position="103"/>
    </location>
    <ligand>
        <name>ATP</name>
        <dbReference type="ChEBI" id="CHEBI:30616"/>
    </ligand>
</feature>
<feature type="binding site" evidence="1">
    <location>
        <position position="106"/>
    </location>
    <ligand>
        <name>ATP</name>
        <dbReference type="ChEBI" id="CHEBI:30616"/>
    </ligand>
</feature>
<feature type="binding site" evidence="1">
    <location>
        <position position="111"/>
    </location>
    <ligand>
        <name>ATP</name>
        <dbReference type="ChEBI" id="CHEBI:30616"/>
    </ligand>
</feature>
<feature type="binding site" evidence="1">
    <location>
        <position position="203"/>
    </location>
    <ligand>
        <name>Mg(2+)</name>
        <dbReference type="ChEBI" id="CHEBI:18420"/>
    </ligand>
</feature>
<feature type="binding site" evidence="1">
    <location>
        <position position="217"/>
    </location>
    <ligand>
        <name>Mg(2+)</name>
        <dbReference type="ChEBI" id="CHEBI:18420"/>
    </ligand>
</feature>
<feature type="binding site" evidence="1">
    <location>
        <position position="268"/>
    </location>
    <ligand>
        <name>substrate</name>
        <note>ligand shared with subunit alpha</note>
    </ligand>
</feature>
<feature type="binding site" evidence="1">
    <location>
        <begin position="325"/>
        <end position="327"/>
    </location>
    <ligand>
        <name>substrate</name>
        <note>ligand shared with subunit alpha</note>
    </ligand>
</feature>
<sequence length="391" mass="42057">MNIHEYQGKDILRKFGVAVPKGIVAYSAEEAKQAAEQLFAEQDSPVVVIKAQIHAGGRGKAGGVKLAKSPEEAHEIASQMLGTTLVTHQTGPEGKEVRRLLVEEGMNIDREFYVGITLDRATSNNVLMISTEGGMEIEKVAEETPELLLKIQVDARFGLQGFQAREAAFFLGLEGEQFRNAVSFITALYNAYTSIDAALAEINPLVVTKEGRVLALDAKINFDSNALYRHKDFIELRDISEEDPFEVEASKSNLNYVRLDGNVGCMVNGAGLAMATMDMIQLAGGRPANFLDVGGGASPQTVEEGFKIILSDKNVKAILVNIFGGIVRCDRVAGGIIEAARKIGLNLPVIVRLEGTNADIAQKMLDESGLNLIAADGLKDAAQKVNQALSA</sequence>
<comment type="function">
    <text evidence="1">Succinyl-CoA synthetase functions in the citric acid cycle (TCA), coupling the hydrolysis of succinyl-CoA to the synthesis of either ATP or GTP and thus represents the only step of substrate-level phosphorylation in the TCA. The beta subunit provides nucleotide specificity of the enzyme and binds the substrate succinate, while the binding sites for coenzyme A and phosphate are found in the alpha subunit.</text>
</comment>
<comment type="catalytic activity">
    <reaction evidence="1">
        <text>succinate + ATP + CoA = succinyl-CoA + ADP + phosphate</text>
        <dbReference type="Rhea" id="RHEA:17661"/>
        <dbReference type="ChEBI" id="CHEBI:30031"/>
        <dbReference type="ChEBI" id="CHEBI:30616"/>
        <dbReference type="ChEBI" id="CHEBI:43474"/>
        <dbReference type="ChEBI" id="CHEBI:57287"/>
        <dbReference type="ChEBI" id="CHEBI:57292"/>
        <dbReference type="ChEBI" id="CHEBI:456216"/>
        <dbReference type="EC" id="6.2.1.5"/>
    </reaction>
    <physiologicalReaction direction="right-to-left" evidence="1">
        <dbReference type="Rhea" id="RHEA:17663"/>
    </physiologicalReaction>
</comment>
<comment type="catalytic activity">
    <reaction evidence="1">
        <text>GTP + succinate + CoA = succinyl-CoA + GDP + phosphate</text>
        <dbReference type="Rhea" id="RHEA:22120"/>
        <dbReference type="ChEBI" id="CHEBI:30031"/>
        <dbReference type="ChEBI" id="CHEBI:37565"/>
        <dbReference type="ChEBI" id="CHEBI:43474"/>
        <dbReference type="ChEBI" id="CHEBI:57287"/>
        <dbReference type="ChEBI" id="CHEBI:57292"/>
        <dbReference type="ChEBI" id="CHEBI:58189"/>
    </reaction>
    <physiologicalReaction direction="right-to-left" evidence="1">
        <dbReference type="Rhea" id="RHEA:22122"/>
    </physiologicalReaction>
</comment>
<comment type="cofactor">
    <cofactor evidence="1">
        <name>Mg(2+)</name>
        <dbReference type="ChEBI" id="CHEBI:18420"/>
    </cofactor>
    <text evidence="1">Binds 1 Mg(2+) ion per subunit.</text>
</comment>
<comment type="pathway">
    <text evidence="1">Carbohydrate metabolism; tricarboxylic acid cycle; succinate from succinyl-CoA (ligase route): step 1/1.</text>
</comment>
<comment type="subunit">
    <text evidence="1">Heterotetramer of two alpha and two beta subunits.</text>
</comment>
<comment type="similarity">
    <text evidence="1">Belongs to the succinate/malate CoA ligase beta subunit family.</text>
</comment>
<evidence type="ECO:0000255" key="1">
    <source>
        <dbReference type="HAMAP-Rule" id="MF_00558"/>
    </source>
</evidence>
<protein>
    <recommendedName>
        <fullName evidence="1">Succinate--CoA ligase [ADP-forming] subunit beta</fullName>
        <ecNumber evidence="1">6.2.1.5</ecNumber>
    </recommendedName>
    <alternativeName>
        <fullName evidence="1">Succinyl-CoA synthetase subunit beta</fullName>
        <shortName evidence="1">SCS-beta</shortName>
    </alternativeName>
</protein>
<organism>
    <name type="scientific">Chlorobium luteolum (strain DSM 273 / BCRC 81028 / 2530)</name>
    <name type="common">Pelodictyon luteolum</name>
    <dbReference type="NCBI Taxonomy" id="319225"/>
    <lineage>
        <taxon>Bacteria</taxon>
        <taxon>Pseudomonadati</taxon>
        <taxon>Chlorobiota</taxon>
        <taxon>Chlorobiia</taxon>
        <taxon>Chlorobiales</taxon>
        <taxon>Chlorobiaceae</taxon>
        <taxon>Chlorobium/Pelodictyon group</taxon>
        <taxon>Pelodictyon</taxon>
    </lineage>
</organism>
<gene>
    <name evidence="1" type="primary">sucC</name>
    <name type="ordered locus">Plut_0497</name>
</gene>